<keyword id="KW-0328">Glycosyltransferase</keyword>
<keyword id="KW-1185">Reference proteome</keyword>
<keyword id="KW-0694">RNA-binding</keyword>
<keyword id="KW-0804">Transcription</keyword>
<keyword id="KW-0805">Transcription regulation</keyword>
<keyword id="KW-0806">Transcription termination</keyword>
<keyword id="KW-0808">Transferase</keyword>
<sequence>MAREVVDAMTMRRALTRITYEIIEQNKGVGNLVFIGIKTRGIFLAQRLAQRLKQLEGVDVPVGSLDITLYRDDHHAVDVAGQAKLNGADIPVDINGKHVILVDDVLFTGRTVRAALDALMDHGRPAKISLAVLVDRGHRELPIRPDFIGKNIPTALDEQVSVALEEHDGHDGISIEKLEE</sequence>
<accession>P71479</accession>
<accession>F9URI6</accession>
<gene>
    <name type="primary">pyrR1</name>
    <name type="synonym">pyrR</name>
    <name type="ordered locus">lp_2704</name>
</gene>
<feature type="chain" id="PRO_0000183041" description="Bifunctional protein PyrR 1">
    <location>
        <begin position="1"/>
        <end position="180"/>
    </location>
</feature>
<feature type="short sequence motif" description="PRPP-binding" evidence="1">
    <location>
        <begin position="99"/>
        <end position="111"/>
    </location>
</feature>
<feature type="binding site" evidence="1">
    <location>
        <begin position="39"/>
        <end position="40"/>
    </location>
    <ligand>
        <name>substrate</name>
    </ligand>
</feature>
<feature type="binding site" evidence="1">
    <location>
        <begin position="103"/>
        <end position="111"/>
    </location>
    <ligand>
        <name>substrate</name>
    </ligand>
</feature>
<feature type="binding site" evidence="1">
    <location>
        <position position="136"/>
    </location>
    <ligand>
        <name>substrate</name>
    </ligand>
</feature>
<feature type="binding site" evidence="1">
    <location>
        <position position="160"/>
    </location>
    <ligand>
        <name>substrate</name>
    </ligand>
</feature>
<organism>
    <name type="scientific">Lactiplantibacillus plantarum (strain ATCC BAA-793 / NCIMB 8826 / WCFS1)</name>
    <name type="common">Lactobacillus plantarum</name>
    <dbReference type="NCBI Taxonomy" id="220668"/>
    <lineage>
        <taxon>Bacteria</taxon>
        <taxon>Bacillati</taxon>
        <taxon>Bacillota</taxon>
        <taxon>Bacilli</taxon>
        <taxon>Lactobacillales</taxon>
        <taxon>Lactobacillaceae</taxon>
        <taxon>Lactiplantibacillus</taxon>
    </lineage>
</organism>
<proteinExistence type="inferred from homology"/>
<name>PYRR1_LACPL</name>
<protein>
    <recommendedName>
        <fullName>Bifunctional protein PyrR 1</fullName>
    </recommendedName>
    <domain>
        <recommendedName>
            <fullName>Pyrimidine operon regulatory protein 1</fullName>
        </recommendedName>
    </domain>
    <domain>
        <recommendedName>
            <fullName>Uracil phosphoribosyltransferase 1</fullName>
            <shortName>UPRTase 1</shortName>
            <ecNumber>2.4.2.9</ecNumber>
        </recommendedName>
    </domain>
</protein>
<dbReference type="EC" id="2.4.2.9"/>
<dbReference type="EMBL" id="Z54240">
    <property type="protein sequence ID" value="CAA91001.1"/>
    <property type="molecule type" value="Genomic_DNA"/>
</dbReference>
<dbReference type="EMBL" id="AL935263">
    <property type="protein sequence ID" value="CCC79825.1"/>
    <property type="molecule type" value="Genomic_DNA"/>
</dbReference>
<dbReference type="RefSeq" id="WP_003639428.1">
    <property type="nucleotide sequence ID" value="NC_004567.2"/>
</dbReference>
<dbReference type="RefSeq" id="YP_004890339.1">
    <property type="nucleotide sequence ID" value="NC_004567.2"/>
</dbReference>
<dbReference type="SMR" id="P71479"/>
<dbReference type="STRING" id="220668.lp_2704"/>
<dbReference type="EnsemblBacteria" id="CCC79825">
    <property type="protein sequence ID" value="CCC79825"/>
    <property type="gene ID" value="lp_2704"/>
</dbReference>
<dbReference type="GeneID" id="89669940"/>
<dbReference type="KEGG" id="lpl:lp_2704"/>
<dbReference type="PATRIC" id="fig|220668.9.peg.2264"/>
<dbReference type="eggNOG" id="COG2065">
    <property type="taxonomic scope" value="Bacteria"/>
</dbReference>
<dbReference type="HOGENOM" id="CLU_094234_2_1_9"/>
<dbReference type="OrthoDB" id="9802227at2"/>
<dbReference type="PhylomeDB" id="P71479"/>
<dbReference type="Proteomes" id="UP000000432">
    <property type="component" value="Chromosome"/>
</dbReference>
<dbReference type="GO" id="GO:0003723">
    <property type="term" value="F:RNA binding"/>
    <property type="evidence" value="ECO:0007669"/>
    <property type="project" value="UniProtKB-UniRule"/>
</dbReference>
<dbReference type="GO" id="GO:0004845">
    <property type="term" value="F:uracil phosphoribosyltransferase activity"/>
    <property type="evidence" value="ECO:0007669"/>
    <property type="project" value="UniProtKB-UniRule"/>
</dbReference>
<dbReference type="GO" id="GO:0006353">
    <property type="term" value="P:DNA-templated transcription termination"/>
    <property type="evidence" value="ECO:0007669"/>
    <property type="project" value="UniProtKB-UniRule"/>
</dbReference>
<dbReference type="CDD" id="cd06223">
    <property type="entry name" value="PRTases_typeI"/>
    <property type="match status" value="1"/>
</dbReference>
<dbReference type="FunFam" id="3.40.50.2020:FF:000020">
    <property type="entry name" value="Bifunctional protein PyrR"/>
    <property type="match status" value="1"/>
</dbReference>
<dbReference type="Gene3D" id="3.40.50.2020">
    <property type="match status" value="1"/>
</dbReference>
<dbReference type="HAMAP" id="MF_01219">
    <property type="entry name" value="PyrR"/>
    <property type="match status" value="1"/>
</dbReference>
<dbReference type="InterPro" id="IPR000836">
    <property type="entry name" value="PRibTrfase_dom"/>
</dbReference>
<dbReference type="InterPro" id="IPR029057">
    <property type="entry name" value="PRTase-like"/>
</dbReference>
<dbReference type="InterPro" id="IPR023050">
    <property type="entry name" value="PyrR"/>
</dbReference>
<dbReference type="InterPro" id="IPR050137">
    <property type="entry name" value="PyrR_bifunctional"/>
</dbReference>
<dbReference type="NCBIfam" id="NF003545">
    <property type="entry name" value="PRK05205.1-1"/>
    <property type="match status" value="1"/>
</dbReference>
<dbReference type="NCBIfam" id="NF003548">
    <property type="entry name" value="PRK05205.1-4"/>
    <property type="match status" value="1"/>
</dbReference>
<dbReference type="NCBIfam" id="NF003549">
    <property type="entry name" value="PRK05205.1-5"/>
    <property type="match status" value="1"/>
</dbReference>
<dbReference type="PANTHER" id="PTHR11608">
    <property type="entry name" value="BIFUNCTIONAL PROTEIN PYRR"/>
    <property type="match status" value="1"/>
</dbReference>
<dbReference type="PANTHER" id="PTHR11608:SF0">
    <property type="entry name" value="BIFUNCTIONAL PROTEIN PYRR"/>
    <property type="match status" value="1"/>
</dbReference>
<dbReference type="Pfam" id="PF00156">
    <property type="entry name" value="Pribosyltran"/>
    <property type="match status" value="1"/>
</dbReference>
<dbReference type="SUPFAM" id="SSF53271">
    <property type="entry name" value="PRTase-like"/>
    <property type="match status" value="1"/>
</dbReference>
<comment type="function">
    <text evidence="2">Regulates transcriptional attenuation of the pyrimidine nucleotide (pyr) operon by binding in a uridine-dependent manner to specific sites on pyr mRNA. This disrupts an antiterminator hairpin in the RNA and favors formation of a downstream transcription terminator, leading to a reduced expression of downstream genes (Probable).</text>
</comment>
<comment type="function">
    <text evidence="1">Also displays a weak uracil phosphoribosyltransferase activity which is not physiologically significant.</text>
</comment>
<comment type="catalytic activity">
    <reaction>
        <text>UMP + diphosphate = 5-phospho-alpha-D-ribose 1-diphosphate + uracil</text>
        <dbReference type="Rhea" id="RHEA:13017"/>
        <dbReference type="ChEBI" id="CHEBI:17568"/>
        <dbReference type="ChEBI" id="CHEBI:33019"/>
        <dbReference type="ChEBI" id="CHEBI:57865"/>
        <dbReference type="ChEBI" id="CHEBI:58017"/>
        <dbReference type="EC" id="2.4.2.9"/>
    </reaction>
</comment>
<comment type="subunit">
    <text evidence="1">Homodimer and homohexamer; in equilibrium.</text>
</comment>
<comment type="similarity">
    <text evidence="2">Belongs to the purine/pyrimidine phosphoribosyltransferase family. PyrR subfamily.</text>
</comment>
<evidence type="ECO:0000250" key="1"/>
<evidence type="ECO:0000305" key="2"/>
<reference key="1">
    <citation type="journal article" date="1996" name="Gene">
        <title>Structure and organisation of the pyrimidine biosynthesis pathway genes in Lactobacillus plantarum: a PCR strategy for sequencing without cloning.</title>
        <authorList>
            <person name="Elagoez A."/>
            <person name="Abdi A."/>
            <person name="Hubert J.-C."/>
            <person name="Kammerer B."/>
        </authorList>
    </citation>
    <scope>NUCLEOTIDE SEQUENCE [GENOMIC DNA]</scope>
    <source>
        <strain>ATCC 8014 / CCM 1904 / DSM 20205 / NCDO 82 / NCIB 6376</strain>
    </source>
</reference>
<reference key="2">
    <citation type="journal article" date="2003" name="Proc. Natl. Acad. Sci. U.S.A.">
        <title>Complete genome sequence of Lactobacillus plantarum WCFS1.</title>
        <authorList>
            <person name="Kleerebezem M."/>
            <person name="Boekhorst J."/>
            <person name="van Kranenburg R."/>
            <person name="Molenaar D."/>
            <person name="Kuipers O.P."/>
            <person name="Leer R."/>
            <person name="Tarchini R."/>
            <person name="Peters S.A."/>
            <person name="Sandbrink H.M."/>
            <person name="Fiers M.W.E.J."/>
            <person name="Stiekema W."/>
            <person name="Klein Lankhorst R.M."/>
            <person name="Bron P.A."/>
            <person name="Hoffer S.M."/>
            <person name="Nierop Groot M.N."/>
            <person name="Kerkhoven R."/>
            <person name="De Vries M."/>
            <person name="Ursing B."/>
            <person name="De Vos W.M."/>
            <person name="Siezen R.J."/>
        </authorList>
    </citation>
    <scope>NUCLEOTIDE SEQUENCE [LARGE SCALE GENOMIC DNA]</scope>
    <source>
        <strain>ATCC BAA-793 / NCIMB 8826 / WCFS1</strain>
    </source>
</reference>
<reference key="3">
    <citation type="journal article" date="2012" name="J. Bacteriol.">
        <title>Complete resequencing and reannotation of the Lactobacillus plantarum WCFS1 genome.</title>
        <authorList>
            <person name="Siezen R.J."/>
            <person name="Francke C."/>
            <person name="Renckens B."/>
            <person name="Boekhorst J."/>
            <person name="Wels M."/>
            <person name="Kleerebezem M."/>
            <person name="van Hijum S.A."/>
        </authorList>
    </citation>
    <scope>NUCLEOTIDE SEQUENCE [LARGE SCALE GENOMIC DNA]</scope>
    <scope>GENOME REANNOTATION</scope>
    <source>
        <strain>ATCC BAA-793 / NCIMB 8826 / WCFS1</strain>
    </source>
</reference>